<sequence>MTIKLELLESALRNALGDQLQSLTLALGEITIVVNSRDYASAMRVLRDHADLRFEELIDLCGVDYSTYGDGAWDGQRFAVVSHLLSITHNWRVRVRVFASDDEMPVVASMTEIWPAANWYEREAFDFFGILFEGHNDLRRILTDYGFIGHPFRKDFPVSGYVEMRYDPEQKRVIYQPVTIDPRENVPRVIREEQYGMK</sequence>
<evidence type="ECO:0000255" key="1">
    <source>
        <dbReference type="HAMAP-Rule" id="MF_01357"/>
    </source>
</evidence>
<dbReference type="EC" id="7.1.1.-" evidence="1"/>
<dbReference type="EMBL" id="CU207211">
    <property type="protein sequence ID" value="CAL61979.1"/>
    <property type="molecule type" value="Genomic_DNA"/>
</dbReference>
<dbReference type="SMR" id="A4G642"/>
<dbReference type="STRING" id="204773.HEAR1824"/>
<dbReference type="KEGG" id="har:HEAR1824"/>
<dbReference type="eggNOG" id="COG0852">
    <property type="taxonomic scope" value="Bacteria"/>
</dbReference>
<dbReference type="HOGENOM" id="CLU_042628_2_1_4"/>
<dbReference type="OrthoDB" id="9803286at2"/>
<dbReference type="Proteomes" id="UP000006697">
    <property type="component" value="Chromosome"/>
</dbReference>
<dbReference type="GO" id="GO:0005886">
    <property type="term" value="C:plasma membrane"/>
    <property type="evidence" value="ECO:0007669"/>
    <property type="project" value="UniProtKB-SubCell"/>
</dbReference>
<dbReference type="GO" id="GO:0008137">
    <property type="term" value="F:NADH dehydrogenase (ubiquinone) activity"/>
    <property type="evidence" value="ECO:0007669"/>
    <property type="project" value="InterPro"/>
</dbReference>
<dbReference type="GO" id="GO:0050136">
    <property type="term" value="F:NADH:ubiquinone reductase (non-electrogenic) activity"/>
    <property type="evidence" value="ECO:0007669"/>
    <property type="project" value="UniProtKB-UniRule"/>
</dbReference>
<dbReference type="GO" id="GO:0048038">
    <property type="term" value="F:quinone binding"/>
    <property type="evidence" value="ECO:0007669"/>
    <property type="project" value="UniProtKB-KW"/>
</dbReference>
<dbReference type="Gene3D" id="3.30.460.80">
    <property type="entry name" value="NADH:ubiquinone oxidoreductase, 30kDa subunit"/>
    <property type="match status" value="1"/>
</dbReference>
<dbReference type="HAMAP" id="MF_01357">
    <property type="entry name" value="NDH1_NuoC"/>
    <property type="match status" value="1"/>
</dbReference>
<dbReference type="InterPro" id="IPR010218">
    <property type="entry name" value="NADH_DH_suC"/>
</dbReference>
<dbReference type="InterPro" id="IPR037232">
    <property type="entry name" value="NADH_quin_OxRdtase_su_C/D-like"/>
</dbReference>
<dbReference type="InterPro" id="IPR001268">
    <property type="entry name" value="NADH_UbQ_OxRdtase_30kDa_su"/>
</dbReference>
<dbReference type="InterPro" id="IPR020396">
    <property type="entry name" value="NADH_UbQ_OxRdtase_CS"/>
</dbReference>
<dbReference type="NCBIfam" id="TIGR01961">
    <property type="entry name" value="NuoC_fam"/>
    <property type="match status" value="1"/>
</dbReference>
<dbReference type="NCBIfam" id="NF004730">
    <property type="entry name" value="PRK06074.1-1"/>
    <property type="match status" value="1"/>
</dbReference>
<dbReference type="PANTHER" id="PTHR10884:SF14">
    <property type="entry name" value="NADH DEHYDROGENASE [UBIQUINONE] IRON-SULFUR PROTEIN 3, MITOCHONDRIAL"/>
    <property type="match status" value="1"/>
</dbReference>
<dbReference type="PANTHER" id="PTHR10884">
    <property type="entry name" value="NADH DEHYDROGENASE UBIQUINONE IRON-SULFUR PROTEIN 3"/>
    <property type="match status" value="1"/>
</dbReference>
<dbReference type="Pfam" id="PF00329">
    <property type="entry name" value="Complex1_30kDa"/>
    <property type="match status" value="1"/>
</dbReference>
<dbReference type="SUPFAM" id="SSF143243">
    <property type="entry name" value="Nqo5-like"/>
    <property type="match status" value="1"/>
</dbReference>
<dbReference type="PROSITE" id="PS00542">
    <property type="entry name" value="COMPLEX1_30K"/>
    <property type="match status" value="1"/>
</dbReference>
<gene>
    <name evidence="1" type="primary">nuoC</name>
    <name type="ordered locus">HEAR1824</name>
</gene>
<comment type="function">
    <text evidence="1">NDH-1 shuttles electrons from NADH, via FMN and iron-sulfur (Fe-S) centers, to quinones in the respiratory chain. The immediate electron acceptor for the enzyme in this species is believed to be ubiquinone. Couples the redox reaction to proton translocation (for every two electrons transferred, four hydrogen ions are translocated across the cytoplasmic membrane), and thus conserves the redox energy in a proton gradient.</text>
</comment>
<comment type="catalytic activity">
    <reaction evidence="1">
        <text>a quinone + NADH + 5 H(+)(in) = a quinol + NAD(+) + 4 H(+)(out)</text>
        <dbReference type="Rhea" id="RHEA:57888"/>
        <dbReference type="ChEBI" id="CHEBI:15378"/>
        <dbReference type="ChEBI" id="CHEBI:24646"/>
        <dbReference type="ChEBI" id="CHEBI:57540"/>
        <dbReference type="ChEBI" id="CHEBI:57945"/>
        <dbReference type="ChEBI" id="CHEBI:132124"/>
    </reaction>
</comment>
<comment type="subunit">
    <text evidence="1">NDH-1 is composed of 14 different subunits. Subunits NuoB, C, D, E, F, and G constitute the peripheral sector of the complex.</text>
</comment>
<comment type="subcellular location">
    <subcellularLocation>
        <location evidence="1">Cell inner membrane</location>
        <topology evidence="1">Peripheral membrane protein</topology>
        <orientation evidence="1">Cytoplasmic side</orientation>
    </subcellularLocation>
</comment>
<comment type="similarity">
    <text evidence="1">Belongs to the complex I 30 kDa subunit family.</text>
</comment>
<keyword id="KW-0997">Cell inner membrane</keyword>
<keyword id="KW-1003">Cell membrane</keyword>
<keyword id="KW-0472">Membrane</keyword>
<keyword id="KW-0520">NAD</keyword>
<keyword id="KW-0874">Quinone</keyword>
<keyword id="KW-1185">Reference proteome</keyword>
<keyword id="KW-1278">Translocase</keyword>
<keyword id="KW-0813">Transport</keyword>
<keyword id="KW-0830">Ubiquinone</keyword>
<protein>
    <recommendedName>
        <fullName evidence="1">NADH-quinone oxidoreductase subunit C</fullName>
        <ecNumber evidence="1">7.1.1.-</ecNumber>
    </recommendedName>
    <alternativeName>
        <fullName evidence="1">NADH dehydrogenase I subunit C</fullName>
    </alternativeName>
    <alternativeName>
        <fullName evidence="1">NDH-1 subunit C</fullName>
    </alternativeName>
</protein>
<name>NUOC_HERAR</name>
<organism>
    <name type="scientific">Herminiimonas arsenicoxydans</name>
    <dbReference type="NCBI Taxonomy" id="204773"/>
    <lineage>
        <taxon>Bacteria</taxon>
        <taxon>Pseudomonadati</taxon>
        <taxon>Pseudomonadota</taxon>
        <taxon>Betaproteobacteria</taxon>
        <taxon>Burkholderiales</taxon>
        <taxon>Oxalobacteraceae</taxon>
        <taxon>Herminiimonas</taxon>
    </lineage>
</organism>
<accession>A4G642</accession>
<proteinExistence type="inferred from homology"/>
<feature type="chain" id="PRO_0000358111" description="NADH-quinone oxidoreductase subunit C">
    <location>
        <begin position="1"/>
        <end position="198"/>
    </location>
</feature>
<reference key="1">
    <citation type="journal article" date="2007" name="PLoS Genet.">
        <title>A tale of two oxidation states: bacterial colonization of arsenic-rich environments.</title>
        <authorList>
            <person name="Muller D."/>
            <person name="Medigue C."/>
            <person name="Koechler S."/>
            <person name="Barbe V."/>
            <person name="Barakat M."/>
            <person name="Talla E."/>
            <person name="Bonnefoy V."/>
            <person name="Krin E."/>
            <person name="Arsene-Ploetze F."/>
            <person name="Carapito C."/>
            <person name="Chandler M."/>
            <person name="Cournoyer B."/>
            <person name="Cruveiller S."/>
            <person name="Dossat C."/>
            <person name="Duval S."/>
            <person name="Heymann M."/>
            <person name="Leize E."/>
            <person name="Lieutaud A."/>
            <person name="Lievremont D."/>
            <person name="Makita Y."/>
            <person name="Mangenot S."/>
            <person name="Nitschke W."/>
            <person name="Ortet P."/>
            <person name="Perdrial N."/>
            <person name="Schoepp B."/>
            <person name="Siguier P."/>
            <person name="Simeonova D.D."/>
            <person name="Rouy Z."/>
            <person name="Segurens B."/>
            <person name="Turlin E."/>
            <person name="Vallenet D."/>
            <person name="van Dorsselaer A."/>
            <person name="Weiss S."/>
            <person name="Weissenbach J."/>
            <person name="Lett M.-C."/>
            <person name="Danchin A."/>
            <person name="Bertin P.N."/>
        </authorList>
    </citation>
    <scope>NUCLEOTIDE SEQUENCE [LARGE SCALE GENOMIC DNA]</scope>
    <source>
        <strain>ULPAs1</strain>
    </source>
</reference>